<accession>O75954</accession>
<accession>D3DUQ7</accession>
<accession>Q53FV2</accession>
<accession>Q6FGJ8</accession>
<reference key="1">
    <citation type="journal article" date="2000" name="Biochim. Biophys. Acta">
        <title>Sequence and expression of seven new tetraspans.</title>
        <authorList>
            <person name="Serru V."/>
            <person name="Dessen P."/>
            <person name="Boucheix C."/>
            <person name="Rubinstein E."/>
        </authorList>
    </citation>
    <scope>NUCLEOTIDE SEQUENCE [MRNA]</scope>
</reference>
<reference key="2">
    <citation type="journal article" date="2004" name="Nat. Genet.">
        <title>Complete sequencing and characterization of 21,243 full-length human cDNAs.</title>
        <authorList>
            <person name="Ota T."/>
            <person name="Suzuki Y."/>
            <person name="Nishikawa T."/>
            <person name="Otsuki T."/>
            <person name="Sugiyama T."/>
            <person name="Irie R."/>
            <person name="Wakamatsu A."/>
            <person name="Hayashi K."/>
            <person name="Sato H."/>
            <person name="Nagai K."/>
            <person name="Kimura K."/>
            <person name="Makita H."/>
            <person name="Sekine M."/>
            <person name="Obayashi M."/>
            <person name="Nishi T."/>
            <person name="Shibahara T."/>
            <person name="Tanaka T."/>
            <person name="Ishii S."/>
            <person name="Yamamoto J."/>
            <person name="Saito K."/>
            <person name="Kawai Y."/>
            <person name="Isono Y."/>
            <person name="Nakamura Y."/>
            <person name="Nagahari K."/>
            <person name="Murakami K."/>
            <person name="Yasuda T."/>
            <person name="Iwayanagi T."/>
            <person name="Wagatsuma M."/>
            <person name="Shiratori A."/>
            <person name="Sudo H."/>
            <person name="Hosoiri T."/>
            <person name="Kaku Y."/>
            <person name="Kodaira H."/>
            <person name="Kondo H."/>
            <person name="Sugawara M."/>
            <person name="Takahashi M."/>
            <person name="Kanda K."/>
            <person name="Yokoi T."/>
            <person name="Furuya T."/>
            <person name="Kikkawa E."/>
            <person name="Omura Y."/>
            <person name="Abe K."/>
            <person name="Kamihara K."/>
            <person name="Katsuta N."/>
            <person name="Sato K."/>
            <person name="Tanikawa M."/>
            <person name="Yamazaki M."/>
            <person name="Ninomiya K."/>
            <person name="Ishibashi T."/>
            <person name="Yamashita H."/>
            <person name="Murakawa K."/>
            <person name="Fujimori K."/>
            <person name="Tanai H."/>
            <person name="Kimata M."/>
            <person name="Watanabe M."/>
            <person name="Hiraoka S."/>
            <person name="Chiba Y."/>
            <person name="Ishida S."/>
            <person name="Ono Y."/>
            <person name="Takiguchi S."/>
            <person name="Watanabe S."/>
            <person name="Yosida M."/>
            <person name="Hotuta T."/>
            <person name="Kusano J."/>
            <person name="Kanehori K."/>
            <person name="Takahashi-Fujii A."/>
            <person name="Hara H."/>
            <person name="Tanase T.-O."/>
            <person name="Nomura Y."/>
            <person name="Togiya S."/>
            <person name="Komai F."/>
            <person name="Hara R."/>
            <person name="Takeuchi K."/>
            <person name="Arita M."/>
            <person name="Imose N."/>
            <person name="Musashino K."/>
            <person name="Yuuki H."/>
            <person name="Oshima A."/>
            <person name="Sasaki N."/>
            <person name="Aotsuka S."/>
            <person name="Yoshikawa Y."/>
            <person name="Matsunawa H."/>
            <person name="Ichihara T."/>
            <person name="Shiohata N."/>
            <person name="Sano S."/>
            <person name="Moriya S."/>
            <person name="Momiyama H."/>
            <person name="Satoh N."/>
            <person name="Takami S."/>
            <person name="Terashima Y."/>
            <person name="Suzuki O."/>
            <person name="Nakagawa S."/>
            <person name="Senoh A."/>
            <person name="Mizoguchi H."/>
            <person name="Goto Y."/>
            <person name="Shimizu F."/>
            <person name="Wakebe H."/>
            <person name="Hishigaki H."/>
            <person name="Watanabe T."/>
            <person name="Sugiyama A."/>
            <person name="Takemoto M."/>
            <person name="Kawakami B."/>
            <person name="Yamazaki M."/>
            <person name="Watanabe K."/>
            <person name="Kumagai A."/>
            <person name="Itakura S."/>
            <person name="Fukuzumi Y."/>
            <person name="Fujimori Y."/>
            <person name="Komiyama M."/>
            <person name="Tashiro H."/>
            <person name="Tanigami A."/>
            <person name="Fujiwara T."/>
            <person name="Ono T."/>
            <person name="Yamada K."/>
            <person name="Fujii Y."/>
            <person name="Ozaki K."/>
            <person name="Hirao M."/>
            <person name="Ohmori Y."/>
            <person name="Kawabata A."/>
            <person name="Hikiji T."/>
            <person name="Kobatake N."/>
            <person name="Inagaki H."/>
            <person name="Ikema Y."/>
            <person name="Okamoto S."/>
            <person name="Okitani R."/>
            <person name="Kawakami T."/>
            <person name="Noguchi S."/>
            <person name="Itoh T."/>
            <person name="Shigeta K."/>
            <person name="Senba T."/>
            <person name="Matsumura K."/>
            <person name="Nakajima Y."/>
            <person name="Mizuno T."/>
            <person name="Morinaga M."/>
            <person name="Sasaki M."/>
            <person name="Togashi T."/>
            <person name="Oyama M."/>
            <person name="Hata H."/>
            <person name="Watanabe M."/>
            <person name="Komatsu T."/>
            <person name="Mizushima-Sugano J."/>
            <person name="Satoh T."/>
            <person name="Shirai Y."/>
            <person name="Takahashi Y."/>
            <person name="Nakagawa K."/>
            <person name="Okumura K."/>
            <person name="Nagase T."/>
            <person name="Nomura N."/>
            <person name="Kikuchi H."/>
            <person name="Masuho Y."/>
            <person name="Yamashita R."/>
            <person name="Nakai K."/>
            <person name="Yada T."/>
            <person name="Nakamura Y."/>
            <person name="Ohara O."/>
            <person name="Isogai T."/>
            <person name="Sugano S."/>
        </authorList>
    </citation>
    <scope>NUCLEOTIDE SEQUENCE [LARGE SCALE MRNA]</scope>
    <source>
        <tissue>Embryo</tissue>
    </source>
</reference>
<reference key="3">
    <citation type="submission" date="2004-06" db="EMBL/GenBank/DDBJ databases">
        <title>Cloning of human full open reading frames in Gateway(TM) system entry vector (pDONR201).</title>
        <authorList>
            <person name="Ebert L."/>
            <person name="Schick M."/>
            <person name="Neubert P."/>
            <person name="Schatten R."/>
            <person name="Henze S."/>
            <person name="Korn B."/>
        </authorList>
    </citation>
    <scope>NUCLEOTIDE SEQUENCE [LARGE SCALE MRNA]</scope>
</reference>
<reference key="4">
    <citation type="submission" date="2005-04" db="EMBL/GenBank/DDBJ databases">
        <authorList>
            <person name="Suzuki Y."/>
            <person name="Sugano S."/>
            <person name="Totoki Y."/>
            <person name="Toyoda A."/>
            <person name="Takeda T."/>
            <person name="Sakaki Y."/>
            <person name="Tanaka A."/>
            <person name="Yokoyama S."/>
        </authorList>
    </citation>
    <scope>NUCLEOTIDE SEQUENCE [LARGE SCALE MRNA]</scope>
    <source>
        <tissue>Pancreas</tissue>
    </source>
</reference>
<reference key="5">
    <citation type="journal article" date="2006" name="Nature">
        <title>The finished DNA sequence of human chromosome 12.</title>
        <authorList>
            <person name="Scherer S.E."/>
            <person name="Muzny D.M."/>
            <person name="Buhay C.J."/>
            <person name="Chen R."/>
            <person name="Cree A."/>
            <person name="Ding Y."/>
            <person name="Dugan-Rocha S."/>
            <person name="Gill R."/>
            <person name="Gunaratne P."/>
            <person name="Harris R.A."/>
            <person name="Hawes A.C."/>
            <person name="Hernandez J."/>
            <person name="Hodgson A.V."/>
            <person name="Hume J."/>
            <person name="Jackson A."/>
            <person name="Khan Z.M."/>
            <person name="Kovar-Smith C."/>
            <person name="Lewis L.R."/>
            <person name="Lozado R.J."/>
            <person name="Metzker M.L."/>
            <person name="Milosavljevic A."/>
            <person name="Miner G.R."/>
            <person name="Montgomery K.T."/>
            <person name="Morgan M.B."/>
            <person name="Nazareth L.V."/>
            <person name="Scott G."/>
            <person name="Sodergren E."/>
            <person name="Song X.-Z."/>
            <person name="Steffen D."/>
            <person name="Lovering R.C."/>
            <person name="Wheeler D.A."/>
            <person name="Worley K.C."/>
            <person name="Yuan Y."/>
            <person name="Zhang Z."/>
            <person name="Adams C.Q."/>
            <person name="Ansari-Lari M.A."/>
            <person name="Ayele M."/>
            <person name="Brown M.J."/>
            <person name="Chen G."/>
            <person name="Chen Z."/>
            <person name="Clerc-Blankenburg K.P."/>
            <person name="Davis C."/>
            <person name="Delgado O."/>
            <person name="Dinh H.H."/>
            <person name="Draper H."/>
            <person name="Gonzalez-Garay M.L."/>
            <person name="Havlak P."/>
            <person name="Jackson L.R."/>
            <person name="Jacob L.S."/>
            <person name="Kelly S.H."/>
            <person name="Li L."/>
            <person name="Li Z."/>
            <person name="Liu J."/>
            <person name="Liu W."/>
            <person name="Lu J."/>
            <person name="Maheshwari M."/>
            <person name="Nguyen B.-V."/>
            <person name="Okwuonu G.O."/>
            <person name="Pasternak S."/>
            <person name="Perez L.M."/>
            <person name="Plopper F.J.H."/>
            <person name="Santibanez J."/>
            <person name="Shen H."/>
            <person name="Tabor P.E."/>
            <person name="Verduzco D."/>
            <person name="Waldron L."/>
            <person name="Wang Q."/>
            <person name="Williams G.A."/>
            <person name="Zhang J."/>
            <person name="Zhou J."/>
            <person name="Allen C.C."/>
            <person name="Amin A.G."/>
            <person name="Anyalebechi V."/>
            <person name="Bailey M."/>
            <person name="Barbaria J.A."/>
            <person name="Bimage K.E."/>
            <person name="Bryant N.P."/>
            <person name="Burch P.E."/>
            <person name="Burkett C.E."/>
            <person name="Burrell K.L."/>
            <person name="Calderon E."/>
            <person name="Cardenas V."/>
            <person name="Carter K."/>
            <person name="Casias K."/>
            <person name="Cavazos I."/>
            <person name="Cavazos S.R."/>
            <person name="Ceasar H."/>
            <person name="Chacko J."/>
            <person name="Chan S.N."/>
            <person name="Chavez D."/>
            <person name="Christopoulos C."/>
            <person name="Chu J."/>
            <person name="Cockrell R."/>
            <person name="Cox C.D."/>
            <person name="Dang M."/>
            <person name="Dathorne S.R."/>
            <person name="David R."/>
            <person name="Davis C.M."/>
            <person name="Davy-Carroll L."/>
            <person name="Deshazo D.R."/>
            <person name="Donlin J.E."/>
            <person name="D'Souza L."/>
            <person name="Eaves K.A."/>
            <person name="Egan A."/>
            <person name="Emery-Cohen A.J."/>
            <person name="Escotto M."/>
            <person name="Flagg N."/>
            <person name="Forbes L.D."/>
            <person name="Gabisi A.M."/>
            <person name="Garza M."/>
            <person name="Hamilton C."/>
            <person name="Henderson N."/>
            <person name="Hernandez O."/>
            <person name="Hines S."/>
            <person name="Hogues M.E."/>
            <person name="Huang M."/>
            <person name="Idlebird D.G."/>
            <person name="Johnson R."/>
            <person name="Jolivet A."/>
            <person name="Jones S."/>
            <person name="Kagan R."/>
            <person name="King L.M."/>
            <person name="Leal B."/>
            <person name="Lebow H."/>
            <person name="Lee S."/>
            <person name="LeVan J.M."/>
            <person name="Lewis L.C."/>
            <person name="London P."/>
            <person name="Lorensuhewa L.M."/>
            <person name="Loulseged H."/>
            <person name="Lovett D.A."/>
            <person name="Lucier A."/>
            <person name="Lucier R.L."/>
            <person name="Ma J."/>
            <person name="Madu R.C."/>
            <person name="Mapua P."/>
            <person name="Martindale A.D."/>
            <person name="Martinez E."/>
            <person name="Massey E."/>
            <person name="Mawhiney S."/>
            <person name="Meador M.G."/>
            <person name="Mendez S."/>
            <person name="Mercado C."/>
            <person name="Mercado I.C."/>
            <person name="Merritt C.E."/>
            <person name="Miner Z.L."/>
            <person name="Minja E."/>
            <person name="Mitchell T."/>
            <person name="Mohabbat F."/>
            <person name="Mohabbat K."/>
            <person name="Montgomery B."/>
            <person name="Moore N."/>
            <person name="Morris S."/>
            <person name="Munidasa M."/>
            <person name="Ngo R.N."/>
            <person name="Nguyen N.B."/>
            <person name="Nickerson E."/>
            <person name="Nwaokelemeh O.O."/>
            <person name="Nwokenkwo S."/>
            <person name="Obregon M."/>
            <person name="Oguh M."/>
            <person name="Oragunye N."/>
            <person name="Oviedo R.J."/>
            <person name="Parish B.J."/>
            <person name="Parker D.N."/>
            <person name="Parrish J."/>
            <person name="Parks K.L."/>
            <person name="Paul H.A."/>
            <person name="Payton B.A."/>
            <person name="Perez A."/>
            <person name="Perrin W."/>
            <person name="Pickens A."/>
            <person name="Primus E.L."/>
            <person name="Pu L.-L."/>
            <person name="Puazo M."/>
            <person name="Quiles M.M."/>
            <person name="Quiroz J.B."/>
            <person name="Rabata D."/>
            <person name="Reeves K."/>
            <person name="Ruiz S.J."/>
            <person name="Shao H."/>
            <person name="Sisson I."/>
            <person name="Sonaike T."/>
            <person name="Sorelle R.P."/>
            <person name="Sutton A.E."/>
            <person name="Svatek A.F."/>
            <person name="Svetz L.A."/>
            <person name="Tamerisa K.S."/>
            <person name="Taylor T.R."/>
            <person name="Teague B."/>
            <person name="Thomas N."/>
            <person name="Thorn R.D."/>
            <person name="Trejos Z.Y."/>
            <person name="Trevino B.K."/>
            <person name="Ukegbu O.N."/>
            <person name="Urban J.B."/>
            <person name="Vasquez L.I."/>
            <person name="Vera V.A."/>
            <person name="Villasana D.M."/>
            <person name="Wang L."/>
            <person name="Ward-Moore S."/>
            <person name="Warren J.T."/>
            <person name="Wei X."/>
            <person name="White F."/>
            <person name="Williamson A.L."/>
            <person name="Wleczyk R."/>
            <person name="Wooden H.S."/>
            <person name="Wooden S.H."/>
            <person name="Yen J."/>
            <person name="Yoon L."/>
            <person name="Yoon V."/>
            <person name="Zorrilla S.E."/>
            <person name="Nelson D."/>
            <person name="Kucherlapati R."/>
            <person name="Weinstock G."/>
            <person name="Gibbs R.A."/>
        </authorList>
    </citation>
    <scope>NUCLEOTIDE SEQUENCE [LARGE SCALE GENOMIC DNA]</scope>
</reference>
<reference key="6">
    <citation type="submission" date="2005-09" db="EMBL/GenBank/DDBJ databases">
        <authorList>
            <person name="Mural R.J."/>
            <person name="Istrail S."/>
            <person name="Sutton G.G."/>
            <person name="Florea L."/>
            <person name="Halpern A.L."/>
            <person name="Mobarry C.M."/>
            <person name="Lippert R."/>
            <person name="Walenz B."/>
            <person name="Shatkay H."/>
            <person name="Dew I."/>
            <person name="Miller J.R."/>
            <person name="Flanigan M.J."/>
            <person name="Edwards N.J."/>
            <person name="Bolanos R."/>
            <person name="Fasulo D."/>
            <person name="Halldorsson B.V."/>
            <person name="Hannenhalli S."/>
            <person name="Turner R."/>
            <person name="Yooseph S."/>
            <person name="Lu F."/>
            <person name="Nusskern D.R."/>
            <person name="Shue B.C."/>
            <person name="Zheng X.H."/>
            <person name="Zhong F."/>
            <person name="Delcher A.L."/>
            <person name="Huson D.H."/>
            <person name="Kravitz S.A."/>
            <person name="Mouchard L."/>
            <person name="Reinert K."/>
            <person name="Remington K.A."/>
            <person name="Clark A.G."/>
            <person name="Waterman M.S."/>
            <person name="Eichler E.E."/>
            <person name="Adams M.D."/>
            <person name="Hunkapiller M.W."/>
            <person name="Myers E.W."/>
            <person name="Venter J.C."/>
        </authorList>
    </citation>
    <scope>NUCLEOTIDE SEQUENCE [LARGE SCALE GENOMIC DNA]</scope>
</reference>
<reference key="7">
    <citation type="journal article" date="2004" name="Genome Res.">
        <title>The status, quality, and expansion of the NIH full-length cDNA project: the Mammalian Gene Collection (MGC).</title>
        <authorList>
            <consortium name="The MGC Project Team"/>
        </authorList>
    </citation>
    <scope>NUCLEOTIDE SEQUENCE [LARGE SCALE MRNA]</scope>
    <source>
        <tissue>Salivary gland</tissue>
    </source>
</reference>
<reference key="8">
    <citation type="journal article" date="2009" name="Biochem. J.">
        <title>Identification of Tspan9 as a novel platelet tetraspanin and the collagen receptor GPVI as a component of tetraspanin microdomains.</title>
        <authorList>
            <person name="Protty M.B."/>
            <person name="Watkins N.A."/>
            <person name="Colombo D."/>
            <person name="Thomas S.G."/>
            <person name="Heath V.L."/>
            <person name="Herbert J.M."/>
            <person name="Bicknell R."/>
            <person name="Senis Y.A."/>
            <person name="Ashman L.K."/>
            <person name="Berditchevski F."/>
            <person name="Ouwehand W.H."/>
            <person name="Watson S.P."/>
            <person name="Tomlinson M.G."/>
        </authorList>
    </citation>
    <scope>TISSUE SPECIFICITY</scope>
</reference>
<evidence type="ECO:0000250" key="1"/>
<evidence type="ECO:0000255" key="2"/>
<evidence type="ECO:0000269" key="3">
    <source>
    </source>
</evidence>
<evidence type="ECO:0000305" key="4"/>
<organism>
    <name type="scientific">Homo sapiens</name>
    <name type="common">Human</name>
    <dbReference type="NCBI Taxonomy" id="9606"/>
    <lineage>
        <taxon>Eukaryota</taxon>
        <taxon>Metazoa</taxon>
        <taxon>Chordata</taxon>
        <taxon>Craniata</taxon>
        <taxon>Vertebrata</taxon>
        <taxon>Euteleostomi</taxon>
        <taxon>Mammalia</taxon>
        <taxon>Eutheria</taxon>
        <taxon>Euarchontoglires</taxon>
        <taxon>Primates</taxon>
        <taxon>Haplorrhini</taxon>
        <taxon>Catarrhini</taxon>
        <taxon>Hominidae</taxon>
        <taxon>Homo</taxon>
    </lineage>
</organism>
<sequence>MARGCLCCLKYMMFLFNLIFWLCGCGLLGVGIWLSVSQGNFATFSPSFPSLSAANLVIAIGTIVMVTGFLGCLGAIKENKCLLLSFFIVLLVILLAELILLILFFVYMDKVNENAKKDLKEGLLLYHTENNVGLKNAWNIIQAEMRCCGVTDYTDWYPVLGENTVPDRCCMENSQGCGRNATTPLWRTGCYEKVKMWFDDNKHVLGTVGMCILIMQILGMAFSMTLFQHIHRTGKKYDA</sequence>
<proteinExistence type="evidence at protein level"/>
<dbReference type="EMBL" id="AF089749">
    <property type="protein sequence ID" value="AAC35859.1"/>
    <property type="molecule type" value="mRNA"/>
</dbReference>
<dbReference type="EMBL" id="AK027366">
    <property type="protein sequence ID" value="BAG51307.1"/>
    <property type="molecule type" value="mRNA"/>
</dbReference>
<dbReference type="EMBL" id="CR542109">
    <property type="protein sequence ID" value="CAG46906.1"/>
    <property type="molecule type" value="mRNA"/>
</dbReference>
<dbReference type="EMBL" id="AK223179">
    <property type="protein sequence ID" value="BAD96899.1"/>
    <property type="molecule type" value="mRNA"/>
</dbReference>
<dbReference type="EMBL" id="AC005912">
    <property type="status" value="NOT_ANNOTATED_CDS"/>
    <property type="molecule type" value="Genomic_DNA"/>
</dbReference>
<dbReference type="EMBL" id="CH471116">
    <property type="protein sequence ID" value="EAW88868.1"/>
    <property type="molecule type" value="Genomic_DNA"/>
</dbReference>
<dbReference type="EMBL" id="CH471116">
    <property type="protein sequence ID" value="EAW88869.1"/>
    <property type="molecule type" value="Genomic_DNA"/>
</dbReference>
<dbReference type="EMBL" id="BC071881">
    <property type="protein sequence ID" value="AAH71881.1"/>
    <property type="molecule type" value="mRNA"/>
</dbReference>
<dbReference type="CCDS" id="CCDS8520.1"/>
<dbReference type="RefSeq" id="NP_001161792.1">
    <property type="nucleotide sequence ID" value="NM_001168320.2"/>
</dbReference>
<dbReference type="RefSeq" id="NP_006666.1">
    <property type="nucleotide sequence ID" value="NM_006675.5"/>
</dbReference>
<dbReference type="RefSeq" id="XP_047284081.1">
    <property type="nucleotide sequence ID" value="XM_047428125.1"/>
</dbReference>
<dbReference type="RefSeq" id="XP_047284082.1">
    <property type="nucleotide sequence ID" value="XM_047428126.1"/>
</dbReference>
<dbReference type="RefSeq" id="XP_054226808.1">
    <property type="nucleotide sequence ID" value="XM_054370833.1"/>
</dbReference>
<dbReference type="RefSeq" id="XP_054226809.1">
    <property type="nucleotide sequence ID" value="XM_054370834.1"/>
</dbReference>
<dbReference type="RefSeq" id="XP_054226810.1">
    <property type="nucleotide sequence ID" value="XM_054370835.1"/>
</dbReference>
<dbReference type="SMR" id="O75954"/>
<dbReference type="BioGRID" id="116076">
    <property type="interactions" value="9"/>
</dbReference>
<dbReference type="FunCoup" id="O75954">
    <property type="interactions" value="188"/>
</dbReference>
<dbReference type="IntAct" id="O75954">
    <property type="interactions" value="5"/>
</dbReference>
<dbReference type="MINT" id="O75954"/>
<dbReference type="STRING" id="9606.ENSP00000011898"/>
<dbReference type="TCDB" id="8.A.40.1.22">
    <property type="family name" value="the tetraspanin (tetraspanin) family"/>
</dbReference>
<dbReference type="GlyCosmos" id="O75954">
    <property type="glycosylation" value="1 site, No reported glycans"/>
</dbReference>
<dbReference type="GlyGen" id="O75954">
    <property type="glycosylation" value="1 site, 1 N-linked glycan (1 site)"/>
</dbReference>
<dbReference type="iPTMnet" id="O75954"/>
<dbReference type="PhosphoSitePlus" id="O75954"/>
<dbReference type="SwissPalm" id="O75954"/>
<dbReference type="BioMuta" id="TSPAN9"/>
<dbReference type="jPOST" id="O75954"/>
<dbReference type="MassIVE" id="O75954"/>
<dbReference type="PaxDb" id="9606-ENSP00000011898"/>
<dbReference type="PeptideAtlas" id="O75954"/>
<dbReference type="ProteomicsDB" id="50320"/>
<dbReference type="Antibodypedia" id="2820">
    <property type="antibodies" value="154 antibodies from 32 providers"/>
</dbReference>
<dbReference type="DNASU" id="10867"/>
<dbReference type="Ensembl" id="ENST00000011898.10">
    <property type="protein sequence ID" value="ENSP00000011898.5"/>
    <property type="gene ID" value="ENSG00000011105.14"/>
</dbReference>
<dbReference type="Ensembl" id="ENST00000537971.5">
    <property type="protein sequence ID" value="ENSP00000444799.1"/>
    <property type="gene ID" value="ENSG00000011105.14"/>
</dbReference>
<dbReference type="GeneID" id="10867"/>
<dbReference type="KEGG" id="hsa:10867"/>
<dbReference type="MANE-Select" id="ENST00000011898.10">
    <property type="protein sequence ID" value="ENSP00000011898.5"/>
    <property type="RefSeq nucleotide sequence ID" value="NM_006675.5"/>
    <property type="RefSeq protein sequence ID" value="NP_006666.1"/>
</dbReference>
<dbReference type="UCSC" id="uc001qlp.4">
    <property type="organism name" value="human"/>
</dbReference>
<dbReference type="AGR" id="HGNC:21640"/>
<dbReference type="CTD" id="10867"/>
<dbReference type="DisGeNET" id="10867"/>
<dbReference type="GeneCards" id="TSPAN9"/>
<dbReference type="HGNC" id="HGNC:21640">
    <property type="gene designation" value="TSPAN9"/>
</dbReference>
<dbReference type="HPA" id="ENSG00000011105">
    <property type="expression patterns" value="Tissue enhanced (brain, heart muscle)"/>
</dbReference>
<dbReference type="MIM" id="613137">
    <property type="type" value="gene"/>
</dbReference>
<dbReference type="neXtProt" id="NX_O75954"/>
<dbReference type="OpenTargets" id="ENSG00000011105"/>
<dbReference type="PharmGKB" id="PA142670694"/>
<dbReference type="VEuPathDB" id="HostDB:ENSG00000011105"/>
<dbReference type="eggNOG" id="KOG3882">
    <property type="taxonomic scope" value="Eukaryota"/>
</dbReference>
<dbReference type="GeneTree" id="ENSGT00940000158225"/>
<dbReference type="HOGENOM" id="CLU_055524_4_3_1"/>
<dbReference type="InParanoid" id="O75954"/>
<dbReference type="OMA" id="DTIFMCI"/>
<dbReference type="OrthoDB" id="432835at2759"/>
<dbReference type="PAN-GO" id="O75954">
    <property type="GO annotations" value="1 GO annotation based on evolutionary models"/>
</dbReference>
<dbReference type="PhylomeDB" id="O75954"/>
<dbReference type="TreeFam" id="TF352892"/>
<dbReference type="PathwayCommons" id="O75954"/>
<dbReference type="SignaLink" id="O75954"/>
<dbReference type="BioGRID-ORCS" id="10867">
    <property type="hits" value="8 hits in 1154 CRISPR screens"/>
</dbReference>
<dbReference type="ChiTaRS" id="TSPAN9">
    <property type="organism name" value="human"/>
</dbReference>
<dbReference type="GenomeRNAi" id="10867"/>
<dbReference type="Pharos" id="O75954">
    <property type="development level" value="Tbio"/>
</dbReference>
<dbReference type="PRO" id="PR:O75954"/>
<dbReference type="Proteomes" id="UP000005640">
    <property type="component" value="Chromosome 12"/>
</dbReference>
<dbReference type="RNAct" id="O75954">
    <property type="molecule type" value="protein"/>
</dbReference>
<dbReference type="Bgee" id="ENSG00000011105">
    <property type="expression patterns" value="Expressed in apex of heart and 194 other cell types or tissues"/>
</dbReference>
<dbReference type="ExpressionAtlas" id="O75954">
    <property type="expression patterns" value="baseline and differential"/>
</dbReference>
<dbReference type="GO" id="GO:0005925">
    <property type="term" value="C:focal adhesion"/>
    <property type="evidence" value="ECO:0007005"/>
    <property type="project" value="UniProtKB"/>
</dbReference>
<dbReference type="GO" id="GO:0140494">
    <property type="term" value="C:migrasome"/>
    <property type="evidence" value="ECO:0007669"/>
    <property type="project" value="Ensembl"/>
</dbReference>
<dbReference type="GO" id="GO:0005886">
    <property type="term" value="C:plasma membrane"/>
    <property type="evidence" value="ECO:0000314"/>
    <property type="project" value="UniProtKB"/>
</dbReference>
<dbReference type="GO" id="GO:0097197">
    <property type="term" value="C:tetraspanin-enriched microdomain"/>
    <property type="evidence" value="ECO:0000314"/>
    <property type="project" value="UniProtKB"/>
</dbReference>
<dbReference type="GO" id="GO:0038063">
    <property type="term" value="P:collagen-activated tyrosine kinase receptor signaling pathway"/>
    <property type="evidence" value="ECO:0007669"/>
    <property type="project" value="Ensembl"/>
</dbReference>
<dbReference type="GO" id="GO:0160040">
    <property type="term" value="P:mitocytosis"/>
    <property type="evidence" value="ECO:0007669"/>
    <property type="project" value="Ensembl"/>
</dbReference>
<dbReference type="GO" id="GO:0001780">
    <property type="term" value="P:neutrophil homeostasis"/>
    <property type="evidence" value="ECO:0007669"/>
    <property type="project" value="Ensembl"/>
</dbReference>
<dbReference type="GO" id="GO:0070527">
    <property type="term" value="P:platelet aggregation"/>
    <property type="evidence" value="ECO:0007669"/>
    <property type="project" value="Ensembl"/>
</dbReference>
<dbReference type="GO" id="GO:0098953">
    <property type="term" value="P:receptor diffusion trapping"/>
    <property type="evidence" value="ECO:0007669"/>
    <property type="project" value="Ensembl"/>
</dbReference>
<dbReference type="GO" id="GO:0051881">
    <property type="term" value="P:regulation of mitochondrial membrane potential"/>
    <property type="evidence" value="ECO:0007669"/>
    <property type="project" value="Ensembl"/>
</dbReference>
<dbReference type="CDD" id="cd03165">
    <property type="entry name" value="NET-5_like_LEL"/>
    <property type="match status" value="1"/>
</dbReference>
<dbReference type="FunFam" id="1.10.1450.10:FF:000008">
    <property type="entry name" value="Tetraspanin"/>
    <property type="match status" value="1"/>
</dbReference>
<dbReference type="Gene3D" id="1.10.1450.10">
    <property type="entry name" value="Tetraspanin"/>
    <property type="match status" value="1"/>
</dbReference>
<dbReference type="InterPro" id="IPR018499">
    <property type="entry name" value="Tetraspanin/Peripherin"/>
</dbReference>
<dbReference type="InterPro" id="IPR000301">
    <property type="entry name" value="Tetraspanin_animals"/>
</dbReference>
<dbReference type="InterPro" id="IPR018503">
    <property type="entry name" value="Tetraspanin_CS"/>
</dbReference>
<dbReference type="InterPro" id="IPR008952">
    <property type="entry name" value="Tetraspanin_EC2_sf"/>
</dbReference>
<dbReference type="PANTHER" id="PTHR19282">
    <property type="entry name" value="TETRASPANIN"/>
    <property type="match status" value="1"/>
</dbReference>
<dbReference type="PANTHER" id="PTHR19282:SF41">
    <property type="entry name" value="TETRASPANIN-9"/>
    <property type="match status" value="1"/>
</dbReference>
<dbReference type="Pfam" id="PF00335">
    <property type="entry name" value="Tetraspanin"/>
    <property type="match status" value="1"/>
</dbReference>
<dbReference type="PIRSF" id="PIRSF002419">
    <property type="entry name" value="Tetraspanin"/>
    <property type="match status" value="1"/>
</dbReference>
<dbReference type="PRINTS" id="PR00259">
    <property type="entry name" value="TMFOUR"/>
</dbReference>
<dbReference type="SUPFAM" id="SSF48652">
    <property type="entry name" value="Tetraspanin"/>
    <property type="match status" value="1"/>
</dbReference>
<dbReference type="PROSITE" id="PS00421">
    <property type="entry name" value="TM4_1"/>
    <property type="match status" value="1"/>
</dbReference>
<comment type="subunit">
    <text evidence="1">Found in a complex with GP6.</text>
</comment>
<comment type="subcellular location">
    <subcellularLocation>
        <location evidence="1">Membrane</location>
        <topology evidence="1">Multi-pass membrane protein</topology>
    </subcellularLocation>
    <text evidence="1">Colocalizes with GP6 in tetraspanin microdomains on the platelet surface.</text>
</comment>
<comment type="tissue specificity">
    <text evidence="3">Expressed in megakaryocytes and platelets (at protein level).</text>
</comment>
<comment type="PTM">
    <text evidence="1">Glycosylated.</text>
</comment>
<comment type="similarity">
    <text evidence="4">Belongs to the tetraspanin (TM4SF) family.</text>
</comment>
<protein>
    <recommendedName>
        <fullName>Tetraspanin-9</fullName>
        <shortName>Tspan-9</shortName>
    </recommendedName>
    <alternativeName>
        <fullName>Tetraspan NET-5</fullName>
    </alternativeName>
</protein>
<gene>
    <name type="primary">TSPAN9</name>
    <name type="synonym">NET5</name>
</gene>
<feature type="chain" id="PRO_0000219253" description="Tetraspanin-9">
    <location>
        <begin position="1"/>
        <end position="239"/>
    </location>
</feature>
<feature type="topological domain" description="Cytoplasmic" evidence="2">
    <location>
        <begin position="1"/>
        <end position="13"/>
    </location>
</feature>
<feature type="transmembrane region" description="Helical" evidence="2">
    <location>
        <begin position="14"/>
        <end position="34"/>
    </location>
</feature>
<feature type="topological domain" description="Extracellular" evidence="2">
    <location>
        <begin position="35"/>
        <end position="55"/>
    </location>
</feature>
<feature type="transmembrane region" description="Helical" evidence="2">
    <location>
        <begin position="56"/>
        <end position="76"/>
    </location>
</feature>
<feature type="topological domain" description="Cytoplasmic" evidence="2">
    <location>
        <begin position="77"/>
        <end position="85"/>
    </location>
</feature>
<feature type="transmembrane region" description="Helical" evidence="2">
    <location>
        <begin position="86"/>
        <end position="106"/>
    </location>
</feature>
<feature type="topological domain" description="Extracellular" evidence="2">
    <location>
        <begin position="107"/>
        <end position="203"/>
    </location>
</feature>
<feature type="transmembrane region" description="Helical" evidence="2">
    <location>
        <begin position="204"/>
        <end position="224"/>
    </location>
</feature>
<feature type="topological domain" description="Cytoplasmic" evidence="2">
    <location>
        <begin position="225"/>
        <end position="239"/>
    </location>
</feature>
<feature type="glycosylation site" description="N-linked (GlcNAc...) asparagine" evidence="2">
    <location>
        <position position="180"/>
    </location>
</feature>
<feature type="sequence conflict" description="In Ref. 4; BAD96899." evidence="4" ref="4">
    <original>Q</original>
    <variation>R</variation>
    <location>
        <position position="216"/>
    </location>
</feature>
<keyword id="KW-0325">Glycoprotein</keyword>
<keyword id="KW-0472">Membrane</keyword>
<keyword id="KW-1267">Proteomics identification</keyword>
<keyword id="KW-1185">Reference proteome</keyword>
<keyword id="KW-0812">Transmembrane</keyword>
<keyword id="KW-1133">Transmembrane helix</keyword>
<name>TSN9_HUMAN</name>